<comment type="function">
    <text evidence="1">Mediates inactivation of the TORC1 complex in response to amino acid starvation. Required for meiotic nuclear division (By similarity).</text>
</comment>
<comment type="similarity">
    <text evidence="4">Belongs to the NPR3 family.</text>
</comment>
<feature type="signal peptide" evidence="2">
    <location>
        <begin position="1"/>
        <end position="23"/>
    </location>
</feature>
<feature type="chain" id="PRO_0000301798" description="Nitrogen permease regulator 3">
    <location>
        <begin position="24"/>
        <end position="766"/>
    </location>
</feature>
<feature type="region of interest" description="Disordered" evidence="3">
    <location>
        <begin position="33"/>
        <end position="140"/>
    </location>
</feature>
<feature type="region of interest" description="Disordered" evidence="3">
    <location>
        <begin position="186"/>
        <end position="257"/>
    </location>
</feature>
<feature type="region of interest" description="Disordered" evidence="3">
    <location>
        <begin position="594"/>
        <end position="638"/>
    </location>
</feature>
<feature type="compositionally biased region" description="Polar residues" evidence="3">
    <location>
        <begin position="36"/>
        <end position="49"/>
    </location>
</feature>
<feature type="compositionally biased region" description="Low complexity" evidence="3">
    <location>
        <begin position="51"/>
        <end position="61"/>
    </location>
</feature>
<feature type="compositionally biased region" description="Acidic residues" evidence="3">
    <location>
        <begin position="62"/>
        <end position="74"/>
    </location>
</feature>
<feature type="compositionally biased region" description="Polar residues" evidence="3">
    <location>
        <begin position="89"/>
        <end position="110"/>
    </location>
</feature>
<feature type="compositionally biased region" description="Basic and acidic residues" evidence="3">
    <location>
        <begin position="118"/>
        <end position="133"/>
    </location>
</feature>
<feature type="compositionally biased region" description="Basic and acidic residues" evidence="3">
    <location>
        <begin position="217"/>
        <end position="250"/>
    </location>
</feature>
<gene>
    <name type="primary">NPR3</name>
    <name type="synonym">RMD11</name>
    <name type="ORF">CIMG_10268</name>
</gene>
<keyword id="KW-0469">Meiosis</keyword>
<keyword id="KW-1185">Reference proteome</keyword>
<keyword id="KW-0732">Signal</keyword>
<reference key="1">
    <citation type="journal article" date="2009" name="Genome Res.">
        <title>Comparative genomic analyses of the human fungal pathogens Coccidioides and their relatives.</title>
        <authorList>
            <person name="Sharpton T.J."/>
            <person name="Stajich J.E."/>
            <person name="Rounsley S.D."/>
            <person name="Gardner M.J."/>
            <person name="Wortman J.R."/>
            <person name="Jordar V.S."/>
            <person name="Maiti R."/>
            <person name="Kodira C.D."/>
            <person name="Neafsey D.E."/>
            <person name="Zeng Q."/>
            <person name="Hung C.-Y."/>
            <person name="McMahan C."/>
            <person name="Muszewska A."/>
            <person name="Grynberg M."/>
            <person name="Mandel M.A."/>
            <person name="Kellner E.M."/>
            <person name="Barker B.M."/>
            <person name="Galgiani J.N."/>
            <person name="Orbach M.J."/>
            <person name="Kirkland T.N."/>
            <person name="Cole G.T."/>
            <person name="Henn M.R."/>
            <person name="Birren B.W."/>
            <person name="Taylor J.W."/>
        </authorList>
    </citation>
    <scope>NUCLEOTIDE SEQUENCE [LARGE SCALE GENOMIC DNA]</scope>
    <source>
        <strain>RS</strain>
    </source>
</reference>
<reference key="2">
    <citation type="journal article" date="2010" name="Genome Res.">
        <title>Population genomic sequencing of Coccidioides fungi reveals recent hybridization and transposon control.</title>
        <authorList>
            <person name="Neafsey D.E."/>
            <person name="Barker B.M."/>
            <person name="Sharpton T.J."/>
            <person name="Stajich J.E."/>
            <person name="Park D.J."/>
            <person name="Whiston E."/>
            <person name="Hung C.-Y."/>
            <person name="McMahan C."/>
            <person name="White J."/>
            <person name="Sykes S."/>
            <person name="Heiman D."/>
            <person name="Young S."/>
            <person name="Zeng Q."/>
            <person name="Abouelleil A."/>
            <person name="Aftuck L."/>
            <person name="Bessette D."/>
            <person name="Brown A."/>
            <person name="FitzGerald M."/>
            <person name="Lui A."/>
            <person name="Macdonald J.P."/>
            <person name="Priest M."/>
            <person name="Orbach M.J."/>
            <person name="Galgiani J.N."/>
            <person name="Kirkland T.N."/>
            <person name="Cole G.T."/>
            <person name="Birren B.W."/>
            <person name="Henn M.R."/>
            <person name="Taylor J.W."/>
            <person name="Rounsley S.D."/>
        </authorList>
    </citation>
    <scope>GENOME REANNOTATION</scope>
    <source>
        <strain>RS</strain>
    </source>
</reference>
<sequence>MSSVVRPPDPCLVAIILITCSRAGPRFVYHYPPNPSIASAPSRSNSRTKPSPRASDSSPSSDNEEGSSSDEDDLSQTPRIGSPRPTNVRRLSSGSPSTKAASQQRKSNLGGSELDDTETPRDGRRSERSHELENPPWDSFLGLGTDVWEKLLCPSSSWHKRRFEVGVNDLTFVGWPVFVREDGTWRKKRKKKKTRAGDSVLDTAPTLGSEKGGYADGGEKLESERDPNVDGRSDKDEEPSRSLIESHPDEDGSVTDGTKDAMTMFNVVFVMNPPILEHNLRIKENYDNVIKKFGKGLKSEQATANYVWKEAQKILHIKEKGRENKSSLSSVYEELLSQSSLAQAIATIYRSISTSKIASITLTPHTTMSLQIPPLTSTPYLPGPMEPAYPGLWLTTADSLSATDEVTEMEYSGPSKVLAKHFALLLLSDEASILKDIEASMGTLGPPLAHYIRSSKPTKSFAQISARSSIPLNDIQVLAAHLIYWRRARAVPPLNKQDTYIVSPNCDLSKLGLATAAYELAFPTMPSLPKMLAVLSGTPRPYASFIPSRDHKGIYYDILAWLMRGGWVTQLRTFGWIKVDQELKSAVEEALASEEAKEREEELASSTATVIRVNEPQTDDGASTSSSSLDSEHSNATPVQERFAHFQGHQKGHDPAQISSLILRPHRASPLEARWLDEIISRFPDDHLADRANESEDFEGEVSIHRYWNAFTKYFNGTDALEKIPVREGLSRKLVWRLLSRIDISSNPADGEVHRNEKVLVTVRHW</sequence>
<accession>Q1DHE5</accession>
<accession>A0A0D6K9M1</accession>
<accession>I9NSM7</accession>
<proteinExistence type="inferred from homology"/>
<name>NPR3_COCIM</name>
<organism>
    <name type="scientific">Coccidioides immitis (strain RS)</name>
    <name type="common">Valley fever fungus</name>
    <dbReference type="NCBI Taxonomy" id="246410"/>
    <lineage>
        <taxon>Eukaryota</taxon>
        <taxon>Fungi</taxon>
        <taxon>Dikarya</taxon>
        <taxon>Ascomycota</taxon>
        <taxon>Pezizomycotina</taxon>
        <taxon>Eurotiomycetes</taxon>
        <taxon>Eurotiomycetidae</taxon>
        <taxon>Onygenales</taxon>
        <taxon>Onygenaceae</taxon>
        <taxon>Coccidioides</taxon>
    </lineage>
</organism>
<protein>
    <recommendedName>
        <fullName>Nitrogen permease regulator 3</fullName>
    </recommendedName>
    <alternativeName>
        <fullName>Required for meiotic nuclear division protein 11</fullName>
    </alternativeName>
</protein>
<dbReference type="EMBL" id="GG704915">
    <property type="protein sequence ID" value="EAS27663.1"/>
    <property type="molecule type" value="Genomic_DNA"/>
</dbReference>
<dbReference type="RefSeq" id="XP_001239246.1">
    <property type="nucleotide sequence ID" value="XM_001239245.2"/>
</dbReference>
<dbReference type="SMR" id="Q1DHE5"/>
<dbReference type="FunCoup" id="Q1DHE5">
    <property type="interactions" value="85"/>
</dbReference>
<dbReference type="STRING" id="246410.Q1DHE5"/>
<dbReference type="GeneID" id="4557948"/>
<dbReference type="KEGG" id="cim:CIMG_10268"/>
<dbReference type="VEuPathDB" id="FungiDB:CIMG_10268"/>
<dbReference type="InParanoid" id="Q1DHE5"/>
<dbReference type="OMA" id="RTDYVWK"/>
<dbReference type="OrthoDB" id="18648at2759"/>
<dbReference type="Proteomes" id="UP000001261">
    <property type="component" value="Unassembled WGS sequence"/>
</dbReference>
<dbReference type="GO" id="GO:1990130">
    <property type="term" value="C:GATOR1 complex"/>
    <property type="evidence" value="ECO:0007669"/>
    <property type="project" value="TreeGrafter"/>
</dbReference>
<dbReference type="GO" id="GO:0034198">
    <property type="term" value="P:cellular response to amino acid starvation"/>
    <property type="evidence" value="ECO:0007669"/>
    <property type="project" value="TreeGrafter"/>
</dbReference>
<dbReference type="GO" id="GO:0051321">
    <property type="term" value="P:meiotic cell cycle"/>
    <property type="evidence" value="ECO:0007669"/>
    <property type="project" value="UniProtKB-KW"/>
</dbReference>
<dbReference type="GO" id="GO:1904262">
    <property type="term" value="P:negative regulation of TORC1 signaling"/>
    <property type="evidence" value="ECO:0007669"/>
    <property type="project" value="TreeGrafter"/>
</dbReference>
<dbReference type="GO" id="GO:0010508">
    <property type="term" value="P:positive regulation of autophagy"/>
    <property type="evidence" value="ECO:0007669"/>
    <property type="project" value="TreeGrafter"/>
</dbReference>
<dbReference type="GO" id="GO:0038202">
    <property type="term" value="P:TORC1 signaling"/>
    <property type="evidence" value="ECO:0007669"/>
    <property type="project" value="TreeGrafter"/>
</dbReference>
<dbReference type="InterPro" id="IPR056603">
    <property type="entry name" value="HTH_NPRL3"/>
</dbReference>
<dbReference type="InterPro" id="IPR005365">
    <property type="entry name" value="Npr3"/>
</dbReference>
<dbReference type="PANTHER" id="PTHR13153">
    <property type="entry name" value="CGTHBA PROTEIN -14 GENE PROTEIN"/>
    <property type="match status" value="1"/>
</dbReference>
<dbReference type="PANTHER" id="PTHR13153:SF5">
    <property type="entry name" value="GATOR COMPLEX PROTEIN NPRL3"/>
    <property type="match status" value="1"/>
</dbReference>
<dbReference type="Pfam" id="PF24064">
    <property type="entry name" value="HTH_NPRL3"/>
    <property type="match status" value="1"/>
</dbReference>
<dbReference type="Pfam" id="PF03666">
    <property type="entry name" value="NPR3"/>
    <property type="match status" value="1"/>
</dbReference>
<evidence type="ECO:0000250" key="1"/>
<evidence type="ECO:0000255" key="2"/>
<evidence type="ECO:0000256" key="3">
    <source>
        <dbReference type="SAM" id="MobiDB-lite"/>
    </source>
</evidence>
<evidence type="ECO:0000305" key="4"/>